<organism>
    <name type="scientific">Dictyostelium discoideum</name>
    <name type="common">Social amoeba</name>
    <dbReference type="NCBI Taxonomy" id="44689"/>
    <lineage>
        <taxon>Eukaryota</taxon>
        <taxon>Amoebozoa</taxon>
        <taxon>Evosea</taxon>
        <taxon>Eumycetozoa</taxon>
        <taxon>Dictyostelia</taxon>
        <taxon>Dictyosteliales</taxon>
        <taxon>Dictyosteliaceae</taxon>
        <taxon>Dictyostelium</taxon>
    </lineage>
</organism>
<proteinExistence type="inferred from homology"/>
<keyword id="KW-0350">Heme biosynthesis</keyword>
<keyword id="KW-0456">Lyase</keyword>
<keyword id="KW-0479">Metal-binding</keyword>
<keyword id="KW-0627">Porphyrin biosynthesis</keyword>
<keyword id="KW-1185">Reference proteome</keyword>
<keyword id="KW-0862">Zinc</keyword>
<gene>
    <name type="primary">alad</name>
    <name type="synonym">hemB</name>
    <name type="ORF">DDB_G0269444</name>
</gene>
<feature type="chain" id="PRO_0000328039" description="Delta-aminolevulinic acid dehydratase">
    <location>
        <begin position="1"/>
        <end position="333"/>
    </location>
</feature>
<feature type="active site" description="Schiff-base intermediate with substrate" evidence="1">
    <location>
        <position position="204"/>
    </location>
</feature>
<feature type="active site" description="Schiff-base intermediate with substrate" evidence="1">
    <location>
        <position position="257"/>
    </location>
</feature>
<feature type="binding site" evidence="1">
    <location>
        <position position="127"/>
    </location>
    <ligand>
        <name>Zn(2+)</name>
        <dbReference type="ChEBI" id="CHEBI:29105"/>
        <note>catalytic</note>
    </ligand>
</feature>
<feature type="binding site" evidence="1">
    <location>
        <position position="129"/>
    </location>
    <ligand>
        <name>Zn(2+)</name>
        <dbReference type="ChEBI" id="CHEBI:29105"/>
        <note>catalytic</note>
    </ligand>
</feature>
<feature type="binding site" evidence="1">
    <location>
        <position position="137"/>
    </location>
    <ligand>
        <name>Zn(2+)</name>
        <dbReference type="ChEBI" id="CHEBI:29105"/>
        <note>catalytic</note>
    </ligand>
</feature>
<feature type="binding site" evidence="1">
    <location>
        <position position="214"/>
    </location>
    <ligand>
        <name>5-aminolevulinate</name>
        <dbReference type="ChEBI" id="CHEBI:356416"/>
        <label>1</label>
    </ligand>
</feature>
<feature type="binding site" evidence="1">
    <location>
        <position position="226"/>
    </location>
    <ligand>
        <name>5-aminolevulinate</name>
        <dbReference type="ChEBI" id="CHEBI:356416"/>
        <label>1</label>
    </ligand>
</feature>
<feature type="binding site" evidence="1">
    <location>
        <position position="283"/>
    </location>
    <ligand>
        <name>5-aminolevulinate</name>
        <dbReference type="ChEBI" id="CHEBI:356416"/>
        <label>2</label>
    </ligand>
</feature>
<feature type="binding site" evidence="1">
    <location>
        <position position="322"/>
    </location>
    <ligand>
        <name>5-aminolevulinate</name>
        <dbReference type="ChEBI" id="CHEBI:356416"/>
        <label>2</label>
    </ligand>
</feature>
<evidence type="ECO:0000250" key="1"/>
<evidence type="ECO:0000305" key="2"/>
<comment type="function">
    <text evidence="1">Catalyzes an early step in the biosynthesis of tetrapyrroles. Binds two molecules of 5-aminolevulinate per subunit, each at a distinct site, and catalyzes their condensation to form porphobilinogen (By similarity).</text>
</comment>
<comment type="catalytic activity">
    <reaction>
        <text>2 5-aminolevulinate = porphobilinogen + 2 H2O + H(+)</text>
        <dbReference type="Rhea" id="RHEA:24064"/>
        <dbReference type="ChEBI" id="CHEBI:15377"/>
        <dbReference type="ChEBI" id="CHEBI:15378"/>
        <dbReference type="ChEBI" id="CHEBI:58126"/>
        <dbReference type="ChEBI" id="CHEBI:356416"/>
        <dbReference type="EC" id="4.2.1.24"/>
    </reaction>
</comment>
<comment type="cofactor">
    <cofactor evidence="1">
        <name>Zn(2+)</name>
        <dbReference type="ChEBI" id="CHEBI:29105"/>
    </cofactor>
    <text evidence="1">Binds 1 zinc ion per monomer.</text>
</comment>
<comment type="pathway">
    <text>Porphyrin-containing compound metabolism; protoporphyrin-IX biosynthesis; coproporphyrinogen-III from 5-aminolevulinate: step 1/4.</text>
</comment>
<comment type="subunit">
    <text evidence="1">Homooctamer.</text>
</comment>
<comment type="similarity">
    <text evidence="2">Belongs to the ALAD family.</text>
</comment>
<sequence>MENNNKNYSHYLHSGYAHPITRSWQGDKVILKSQLIYPIFVTDLINTKTEIKSLPGQYQISSDLVVEFLRPLVEKGLKSIILFGVIISGVKDEQASSADKRESSPVIKSIELIKNEFPEILICTDLCLCAYTDHGHCGVLTEEGFIENEKSIIRLGEIALSFAKAGAHVIAPSDMMDCRVGQIKKVLFQNGYGGRVAVMAYSSKFASSYYGPFRDAAGSGAKHGDRQAYQLPIASRGLGLRAALRDEAEGADFIMVKPAGPYMDIIREVKDHVKVPVCCYQVSGEYAMIYHASVAGGIDLKSGVMESLISLQRSGCDIFITYFTPQLLDWLKL</sequence>
<name>HEM2_DICDI</name>
<dbReference type="EC" id="4.2.1.24"/>
<dbReference type="EMBL" id="AAFI02000005">
    <property type="protein sequence ID" value="EAL72072.2"/>
    <property type="molecule type" value="Genomic_DNA"/>
</dbReference>
<dbReference type="RefSeq" id="XP_645975.2">
    <property type="nucleotide sequence ID" value="XM_640883.2"/>
</dbReference>
<dbReference type="SMR" id="Q55E06"/>
<dbReference type="FunCoup" id="Q55E06">
    <property type="interactions" value="401"/>
</dbReference>
<dbReference type="STRING" id="44689.Q55E06"/>
<dbReference type="PaxDb" id="44689-DDB0231415"/>
<dbReference type="EnsemblProtists" id="EAL72072">
    <property type="protein sequence ID" value="EAL72072"/>
    <property type="gene ID" value="DDB_G0269444"/>
</dbReference>
<dbReference type="GeneID" id="8616919"/>
<dbReference type="KEGG" id="ddi:DDB_G0269444"/>
<dbReference type="dictyBase" id="DDB_G0269444">
    <property type="gene designation" value="hemB"/>
</dbReference>
<dbReference type="VEuPathDB" id="AmoebaDB:DDB_G0269444"/>
<dbReference type="eggNOG" id="KOG2794">
    <property type="taxonomic scope" value="Eukaryota"/>
</dbReference>
<dbReference type="HOGENOM" id="CLU_035731_0_1_1"/>
<dbReference type="InParanoid" id="Q55E06"/>
<dbReference type="OMA" id="YQMDYAN"/>
<dbReference type="PhylomeDB" id="Q55E06"/>
<dbReference type="Reactome" id="R-DDI-189451">
    <property type="pathway name" value="Heme biosynthesis"/>
</dbReference>
<dbReference type="Reactome" id="R-DDI-6798695">
    <property type="pathway name" value="Neutrophil degranulation"/>
</dbReference>
<dbReference type="UniPathway" id="UPA00251">
    <property type="reaction ID" value="UER00318"/>
</dbReference>
<dbReference type="PRO" id="PR:Q55E06"/>
<dbReference type="Proteomes" id="UP000002195">
    <property type="component" value="Chromosome 1"/>
</dbReference>
<dbReference type="GO" id="GO:0005829">
    <property type="term" value="C:cytosol"/>
    <property type="evidence" value="ECO:0000318"/>
    <property type="project" value="GO_Central"/>
</dbReference>
<dbReference type="GO" id="GO:0004655">
    <property type="term" value="F:porphobilinogen synthase activity"/>
    <property type="evidence" value="ECO:0000250"/>
    <property type="project" value="UniProtKB"/>
</dbReference>
<dbReference type="GO" id="GO:0008270">
    <property type="term" value="F:zinc ion binding"/>
    <property type="evidence" value="ECO:0000250"/>
    <property type="project" value="UniProtKB"/>
</dbReference>
<dbReference type="GO" id="GO:0006783">
    <property type="term" value="P:heme biosynthetic process"/>
    <property type="evidence" value="ECO:0000250"/>
    <property type="project" value="UniProtKB"/>
</dbReference>
<dbReference type="GO" id="GO:0006782">
    <property type="term" value="P:protoporphyrinogen IX biosynthetic process"/>
    <property type="evidence" value="ECO:0007669"/>
    <property type="project" value="UniProtKB-UniPathway"/>
</dbReference>
<dbReference type="CDD" id="cd04824">
    <property type="entry name" value="eu_ALAD_PBGS_cysteine_rich"/>
    <property type="match status" value="1"/>
</dbReference>
<dbReference type="FunFam" id="3.20.20.70:FF:000019">
    <property type="entry name" value="Delta-aminolevulinic acid dehydratase"/>
    <property type="match status" value="1"/>
</dbReference>
<dbReference type="Gene3D" id="3.20.20.70">
    <property type="entry name" value="Aldolase class I"/>
    <property type="match status" value="1"/>
</dbReference>
<dbReference type="InterPro" id="IPR001731">
    <property type="entry name" value="ALAD"/>
</dbReference>
<dbReference type="InterPro" id="IPR030656">
    <property type="entry name" value="ALAD_AS"/>
</dbReference>
<dbReference type="InterPro" id="IPR013785">
    <property type="entry name" value="Aldolase_TIM"/>
</dbReference>
<dbReference type="NCBIfam" id="NF006762">
    <property type="entry name" value="PRK09283.1"/>
    <property type="match status" value="1"/>
</dbReference>
<dbReference type="PANTHER" id="PTHR11458">
    <property type="entry name" value="DELTA-AMINOLEVULINIC ACID DEHYDRATASE"/>
    <property type="match status" value="1"/>
</dbReference>
<dbReference type="PANTHER" id="PTHR11458:SF0">
    <property type="entry name" value="DELTA-AMINOLEVULINIC ACID DEHYDRATASE"/>
    <property type="match status" value="1"/>
</dbReference>
<dbReference type="Pfam" id="PF00490">
    <property type="entry name" value="ALAD"/>
    <property type="match status" value="1"/>
</dbReference>
<dbReference type="PIRSF" id="PIRSF001415">
    <property type="entry name" value="Porphbilin_synth"/>
    <property type="match status" value="1"/>
</dbReference>
<dbReference type="PRINTS" id="PR00144">
    <property type="entry name" value="DALDHYDRTASE"/>
</dbReference>
<dbReference type="SMART" id="SM01004">
    <property type="entry name" value="ALAD"/>
    <property type="match status" value="1"/>
</dbReference>
<dbReference type="SUPFAM" id="SSF51569">
    <property type="entry name" value="Aldolase"/>
    <property type="match status" value="1"/>
</dbReference>
<dbReference type="PROSITE" id="PS00169">
    <property type="entry name" value="D_ALA_DEHYDRATASE"/>
    <property type="match status" value="1"/>
</dbReference>
<accession>Q55E06</accession>
<protein>
    <recommendedName>
        <fullName>Delta-aminolevulinic acid dehydratase</fullName>
        <shortName>ALADH</shortName>
        <ecNumber>4.2.1.24</ecNumber>
    </recommendedName>
    <alternativeName>
        <fullName>Porphobilinogen synthase</fullName>
    </alternativeName>
</protein>
<reference key="1">
    <citation type="journal article" date="2005" name="Nature">
        <title>The genome of the social amoeba Dictyostelium discoideum.</title>
        <authorList>
            <person name="Eichinger L."/>
            <person name="Pachebat J.A."/>
            <person name="Gloeckner G."/>
            <person name="Rajandream M.A."/>
            <person name="Sucgang R."/>
            <person name="Berriman M."/>
            <person name="Song J."/>
            <person name="Olsen R."/>
            <person name="Szafranski K."/>
            <person name="Xu Q."/>
            <person name="Tunggal B."/>
            <person name="Kummerfeld S."/>
            <person name="Madera M."/>
            <person name="Konfortov B.A."/>
            <person name="Rivero F."/>
            <person name="Bankier A.T."/>
            <person name="Lehmann R."/>
            <person name="Hamlin N."/>
            <person name="Davies R."/>
            <person name="Gaudet P."/>
            <person name="Fey P."/>
            <person name="Pilcher K."/>
            <person name="Chen G."/>
            <person name="Saunders D."/>
            <person name="Sodergren E.J."/>
            <person name="Davis P."/>
            <person name="Kerhornou A."/>
            <person name="Nie X."/>
            <person name="Hall N."/>
            <person name="Anjard C."/>
            <person name="Hemphill L."/>
            <person name="Bason N."/>
            <person name="Farbrother P."/>
            <person name="Desany B."/>
            <person name="Just E."/>
            <person name="Morio T."/>
            <person name="Rost R."/>
            <person name="Churcher C.M."/>
            <person name="Cooper J."/>
            <person name="Haydock S."/>
            <person name="van Driessche N."/>
            <person name="Cronin A."/>
            <person name="Goodhead I."/>
            <person name="Muzny D.M."/>
            <person name="Mourier T."/>
            <person name="Pain A."/>
            <person name="Lu M."/>
            <person name="Harper D."/>
            <person name="Lindsay R."/>
            <person name="Hauser H."/>
            <person name="James K.D."/>
            <person name="Quiles M."/>
            <person name="Madan Babu M."/>
            <person name="Saito T."/>
            <person name="Buchrieser C."/>
            <person name="Wardroper A."/>
            <person name="Felder M."/>
            <person name="Thangavelu M."/>
            <person name="Johnson D."/>
            <person name="Knights A."/>
            <person name="Loulseged H."/>
            <person name="Mungall K.L."/>
            <person name="Oliver K."/>
            <person name="Price C."/>
            <person name="Quail M.A."/>
            <person name="Urushihara H."/>
            <person name="Hernandez J."/>
            <person name="Rabbinowitsch E."/>
            <person name="Steffen D."/>
            <person name="Sanders M."/>
            <person name="Ma J."/>
            <person name="Kohara Y."/>
            <person name="Sharp S."/>
            <person name="Simmonds M.N."/>
            <person name="Spiegler S."/>
            <person name="Tivey A."/>
            <person name="Sugano S."/>
            <person name="White B."/>
            <person name="Walker D."/>
            <person name="Woodward J.R."/>
            <person name="Winckler T."/>
            <person name="Tanaka Y."/>
            <person name="Shaulsky G."/>
            <person name="Schleicher M."/>
            <person name="Weinstock G.M."/>
            <person name="Rosenthal A."/>
            <person name="Cox E.C."/>
            <person name="Chisholm R.L."/>
            <person name="Gibbs R.A."/>
            <person name="Loomis W.F."/>
            <person name="Platzer M."/>
            <person name="Kay R.R."/>
            <person name="Williams J.G."/>
            <person name="Dear P.H."/>
            <person name="Noegel A.A."/>
            <person name="Barrell B.G."/>
            <person name="Kuspa A."/>
        </authorList>
    </citation>
    <scope>NUCLEOTIDE SEQUENCE [LARGE SCALE GENOMIC DNA]</scope>
    <source>
        <strain>AX4</strain>
    </source>
</reference>